<accession>A5IM96</accession>
<keyword id="KW-0479">Metal-binding</keyword>
<keyword id="KW-0687">Ribonucleoprotein</keyword>
<keyword id="KW-0689">Ribosomal protein</keyword>
<keyword id="KW-0694">RNA-binding</keyword>
<keyword id="KW-0699">rRNA-binding</keyword>
<keyword id="KW-0862">Zinc</keyword>
<comment type="function">
    <text evidence="1">Binds 16S rRNA, required for the assembly of 30S particles and may also be responsible for determining the conformation of the 16S rRNA at the A site.</text>
</comment>
<comment type="cofactor">
    <cofactor evidence="1">
        <name>Zn(2+)</name>
        <dbReference type="ChEBI" id="CHEBI:29105"/>
    </cofactor>
    <text evidence="1">Binds 1 zinc ion per subunit.</text>
</comment>
<comment type="subunit">
    <text evidence="1">Part of the 30S ribosomal subunit. Contacts proteins S3 and S10.</text>
</comment>
<comment type="similarity">
    <text evidence="1">Belongs to the universal ribosomal protein uS14 family. Zinc-binding uS14 subfamily.</text>
</comment>
<feature type="chain" id="PRO_1000067973" description="Small ribosomal subunit protein uS14">
    <location>
        <begin position="1"/>
        <end position="61"/>
    </location>
</feature>
<feature type="binding site" evidence="1">
    <location>
        <position position="24"/>
    </location>
    <ligand>
        <name>Zn(2+)</name>
        <dbReference type="ChEBI" id="CHEBI:29105"/>
    </ligand>
</feature>
<feature type="binding site" evidence="1">
    <location>
        <position position="27"/>
    </location>
    <ligand>
        <name>Zn(2+)</name>
        <dbReference type="ChEBI" id="CHEBI:29105"/>
    </ligand>
</feature>
<feature type="binding site" evidence="1">
    <location>
        <position position="40"/>
    </location>
    <ligand>
        <name>Zn(2+)</name>
        <dbReference type="ChEBI" id="CHEBI:29105"/>
    </ligand>
</feature>
<feature type="binding site" evidence="1">
    <location>
        <position position="43"/>
    </location>
    <ligand>
        <name>Zn(2+)</name>
        <dbReference type="ChEBI" id="CHEBI:29105"/>
    </ligand>
</feature>
<sequence>MAKKAMIERWKKPKKYKVREYTRCHICGRPRAVYREFGLCRVCFRKLALEGKLPGVRKASW</sequence>
<organism>
    <name type="scientific">Thermotoga petrophila (strain ATCC BAA-488 / DSM 13995 / JCM 10881 / RKU-1)</name>
    <dbReference type="NCBI Taxonomy" id="390874"/>
    <lineage>
        <taxon>Bacteria</taxon>
        <taxon>Thermotogati</taxon>
        <taxon>Thermotogota</taxon>
        <taxon>Thermotogae</taxon>
        <taxon>Thermotogales</taxon>
        <taxon>Thermotogaceae</taxon>
        <taxon>Thermotoga</taxon>
    </lineage>
</organism>
<reference key="1">
    <citation type="submission" date="2007-05" db="EMBL/GenBank/DDBJ databases">
        <title>Complete sequence of Thermotoga petrophila RKU-1.</title>
        <authorList>
            <consortium name="US DOE Joint Genome Institute"/>
            <person name="Copeland A."/>
            <person name="Lucas S."/>
            <person name="Lapidus A."/>
            <person name="Barry K."/>
            <person name="Glavina del Rio T."/>
            <person name="Dalin E."/>
            <person name="Tice H."/>
            <person name="Pitluck S."/>
            <person name="Sims D."/>
            <person name="Brettin T."/>
            <person name="Bruce D."/>
            <person name="Detter J.C."/>
            <person name="Han C."/>
            <person name="Tapia R."/>
            <person name="Schmutz J."/>
            <person name="Larimer F."/>
            <person name="Land M."/>
            <person name="Hauser L."/>
            <person name="Kyrpides N."/>
            <person name="Mikhailova N."/>
            <person name="Nelson K."/>
            <person name="Gogarten J.P."/>
            <person name="Noll K."/>
            <person name="Richardson P."/>
        </authorList>
    </citation>
    <scope>NUCLEOTIDE SEQUENCE [LARGE SCALE GENOMIC DNA]</scope>
    <source>
        <strain>ATCC BAA-488 / DSM 13995 / JCM 10881 / RKU-1</strain>
    </source>
</reference>
<proteinExistence type="inferred from homology"/>
<evidence type="ECO:0000255" key="1">
    <source>
        <dbReference type="HAMAP-Rule" id="MF_01364"/>
    </source>
</evidence>
<evidence type="ECO:0000305" key="2"/>
<protein>
    <recommendedName>
        <fullName evidence="1">Small ribosomal subunit protein uS14</fullName>
    </recommendedName>
    <alternativeName>
        <fullName evidence="2">30S ribosomal protein S14 type Z</fullName>
    </alternativeName>
</protein>
<dbReference type="EMBL" id="CP000702">
    <property type="protein sequence ID" value="ABQ47319.1"/>
    <property type="molecule type" value="Genomic_DNA"/>
</dbReference>
<dbReference type="RefSeq" id="WP_008195018.1">
    <property type="nucleotide sequence ID" value="NC_009486.1"/>
</dbReference>
<dbReference type="SMR" id="A5IM96"/>
<dbReference type="STRING" id="390874.Tpet_1305"/>
<dbReference type="KEGG" id="tpt:Tpet_1305"/>
<dbReference type="eggNOG" id="COG0199">
    <property type="taxonomic scope" value="Bacteria"/>
</dbReference>
<dbReference type="HOGENOM" id="CLU_139869_3_0_0"/>
<dbReference type="Proteomes" id="UP000006558">
    <property type="component" value="Chromosome"/>
</dbReference>
<dbReference type="GO" id="GO:0005737">
    <property type="term" value="C:cytoplasm"/>
    <property type="evidence" value="ECO:0007669"/>
    <property type="project" value="UniProtKB-ARBA"/>
</dbReference>
<dbReference type="GO" id="GO:0015935">
    <property type="term" value="C:small ribosomal subunit"/>
    <property type="evidence" value="ECO:0007669"/>
    <property type="project" value="TreeGrafter"/>
</dbReference>
<dbReference type="GO" id="GO:0019843">
    <property type="term" value="F:rRNA binding"/>
    <property type="evidence" value="ECO:0007669"/>
    <property type="project" value="UniProtKB-UniRule"/>
</dbReference>
<dbReference type="GO" id="GO:0003735">
    <property type="term" value="F:structural constituent of ribosome"/>
    <property type="evidence" value="ECO:0007669"/>
    <property type="project" value="InterPro"/>
</dbReference>
<dbReference type="GO" id="GO:0008270">
    <property type="term" value="F:zinc ion binding"/>
    <property type="evidence" value="ECO:0007669"/>
    <property type="project" value="UniProtKB-UniRule"/>
</dbReference>
<dbReference type="GO" id="GO:0006412">
    <property type="term" value="P:translation"/>
    <property type="evidence" value="ECO:0007669"/>
    <property type="project" value="UniProtKB-UniRule"/>
</dbReference>
<dbReference type="FunFam" id="4.10.830.10:FF:000001">
    <property type="entry name" value="30S ribosomal protein S14 type Z"/>
    <property type="match status" value="1"/>
</dbReference>
<dbReference type="Gene3D" id="4.10.830.10">
    <property type="entry name" value="30s Ribosomal Protein S14, Chain N"/>
    <property type="match status" value="1"/>
</dbReference>
<dbReference type="HAMAP" id="MF_01364_B">
    <property type="entry name" value="Ribosomal_uS14_2_B"/>
    <property type="match status" value="1"/>
</dbReference>
<dbReference type="InterPro" id="IPR001209">
    <property type="entry name" value="Ribosomal_uS14"/>
</dbReference>
<dbReference type="InterPro" id="IPR023053">
    <property type="entry name" value="Ribosomal_uS14_bact"/>
</dbReference>
<dbReference type="InterPro" id="IPR018271">
    <property type="entry name" value="Ribosomal_uS14_CS"/>
</dbReference>
<dbReference type="InterPro" id="IPR043140">
    <property type="entry name" value="Ribosomal_uS14_sf"/>
</dbReference>
<dbReference type="NCBIfam" id="NF005974">
    <property type="entry name" value="PRK08061.1"/>
    <property type="match status" value="1"/>
</dbReference>
<dbReference type="PANTHER" id="PTHR19836">
    <property type="entry name" value="30S RIBOSOMAL PROTEIN S14"/>
    <property type="match status" value="1"/>
</dbReference>
<dbReference type="PANTHER" id="PTHR19836:SF19">
    <property type="entry name" value="SMALL RIBOSOMAL SUBUNIT PROTEIN US14M"/>
    <property type="match status" value="1"/>
</dbReference>
<dbReference type="Pfam" id="PF00253">
    <property type="entry name" value="Ribosomal_S14"/>
    <property type="match status" value="1"/>
</dbReference>
<dbReference type="SUPFAM" id="SSF57716">
    <property type="entry name" value="Glucocorticoid receptor-like (DNA-binding domain)"/>
    <property type="match status" value="1"/>
</dbReference>
<dbReference type="PROSITE" id="PS00527">
    <property type="entry name" value="RIBOSOMAL_S14"/>
    <property type="match status" value="1"/>
</dbReference>
<gene>
    <name evidence="1" type="primary">rpsZ</name>
    <name evidence="1" type="synonym">rpsN</name>
    <name type="ordered locus">Tpet_1305</name>
</gene>
<name>RS14Z_THEP1</name>